<proteinExistence type="inferred from homology"/>
<accession>Q9UX95</accession>
<dbReference type="EMBL" id="Y18930">
    <property type="protein sequence ID" value="CAB57597.1"/>
    <property type="molecule type" value="Genomic_DNA"/>
</dbReference>
<dbReference type="EMBL" id="AE006641">
    <property type="protein sequence ID" value="AAK41008.1"/>
    <property type="molecule type" value="Genomic_DNA"/>
</dbReference>
<dbReference type="PIR" id="A90219">
    <property type="entry name" value="A90219"/>
</dbReference>
<dbReference type="SMR" id="Q9UX95"/>
<dbReference type="FunCoup" id="Q9UX95">
    <property type="interactions" value="259"/>
</dbReference>
<dbReference type="STRING" id="273057.SSO0707"/>
<dbReference type="PaxDb" id="273057-SSO0707"/>
<dbReference type="EnsemblBacteria" id="AAK41008">
    <property type="protein sequence ID" value="AAK41008"/>
    <property type="gene ID" value="SSO0707"/>
</dbReference>
<dbReference type="KEGG" id="sso:SSO0707"/>
<dbReference type="PATRIC" id="fig|273057.12.peg.707"/>
<dbReference type="eggNOG" id="arCOG04094">
    <property type="taxonomic scope" value="Archaea"/>
</dbReference>
<dbReference type="HOGENOM" id="CLU_093240_2_1_2"/>
<dbReference type="InParanoid" id="Q9UX95"/>
<dbReference type="PhylomeDB" id="Q9UX95"/>
<dbReference type="Proteomes" id="UP000001974">
    <property type="component" value="Chromosome"/>
</dbReference>
<dbReference type="GO" id="GO:0022625">
    <property type="term" value="C:cytosolic large ribosomal subunit"/>
    <property type="evidence" value="ECO:0000318"/>
    <property type="project" value="GO_Central"/>
</dbReference>
<dbReference type="GO" id="GO:0003723">
    <property type="term" value="F:RNA binding"/>
    <property type="evidence" value="ECO:0000318"/>
    <property type="project" value="GO_Central"/>
</dbReference>
<dbReference type="GO" id="GO:0019843">
    <property type="term" value="F:rRNA binding"/>
    <property type="evidence" value="ECO:0007669"/>
    <property type="project" value="UniProtKB-UniRule"/>
</dbReference>
<dbReference type="GO" id="GO:0003735">
    <property type="term" value="F:structural constituent of ribosome"/>
    <property type="evidence" value="ECO:0000318"/>
    <property type="project" value="GO_Central"/>
</dbReference>
<dbReference type="GO" id="GO:0002181">
    <property type="term" value="P:cytoplasmic translation"/>
    <property type="evidence" value="ECO:0000318"/>
    <property type="project" value="GO_Central"/>
</dbReference>
<dbReference type="GO" id="GO:0042273">
    <property type="term" value="P:ribosomal large subunit biogenesis"/>
    <property type="evidence" value="ECO:0000318"/>
    <property type="project" value="GO_Central"/>
</dbReference>
<dbReference type="CDD" id="cd06089">
    <property type="entry name" value="KOW_RPL26"/>
    <property type="match status" value="1"/>
</dbReference>
<dbReference type="FunFam" id="2.30.30.30:FF:000009">
    <property type="entry name" value="60S ribosomal protein L26"/>
    <property type="match status" value="1"/>
</dbReference>
<dbReference type="Gene3D" id="2.30.30.30">
    <property type="match status" value="1"/>
</dbReference>
<dbReference type="HAMAP" id="MF_01326_A">
    <property type="entry name" value="Ribosomal_uL24_A"/>
    <property type="match status" value="1"/>
</dbReference>
<dbReference type="InterPro" id="IPR005824">
    <property type="entry name" value="KOW"/>
</dbReference>
<dbReference type="InterPro" id="IPR014722">
    <property type="entry name" value="Rib_uL2_dom2"/>
</dbReference>
<dbReference type="InterPro" id="IPR005756">
    <property type="entry name" value="Ribosomal_uL24_euk/arc"/>
</dbReference>
<dbReference type="InterPro" id="IPR041988">
    <property type="entry name" value="Ribosomal_uL24_KOW"/>
</dbReference>
<dbReference type="InterPro" id="IPR008991">
    <property type="entry name" value="Translation_prot_SH3-like_sf"/>
</dbReference>
<dbReference type="NCBIfam" id="TIGR01080">
    <property type="entry name" value="rplX_A_E"/>
    <property type="match status" value="1"/>
</dbReference>
<dbReference type="PANTHER" id="PTHR11143">
    <property type="entry name" value="60S RIBOSOMAL PROTEIN L26 FAMILY MEMBER"/>
    <property type="match status" value="1"/>
</dbReference>
<dbReference type="Pfam" id="PF00467">
    <property type="entry name" value="KOW"/>
    <property type="match status" value="1"/>
</dbReference>
<dbReference type="Pfam" id="PF16906">
    <property type="entry name" value="Ribosomal_L26"/>
    <property type="match status" value="1"/>
</dbReference>
<dbReference type="SMART" id="SM00739">
    <property type="entry name" value="KOW"/>
    <property type="match status" value="1"/>
</dbReference>
<dbReference type="SUPFAM" id="SSF50104">
    <property type="entry name" value="Translation proteins SH3-like domain"/>
    <property type="match status" value="1"/>
</dbReference>
<reference key="1">
    <citation type="journal article" date="2000" name="Genome">
        <title>Gene content and organization of a 281-kbp contig from the genome of the extremely thermophilic archaeon, Sulfolobus solfataricus P2.</title>
        <authorList>
            <person name="Charlebois R.L."/>
            <person name="Singh R.K."/>
            <person name="Chan-Weiher C.C.-Y."/>
            <person name="Allard G."/>
            <person name="Chow C."/>
            <person name="Confalonieri F."/>
            <person name="Curtis B."/>
            <person name="Duguet M."/>
            <person name="Erauso G."/>
            <person name="Faguy D."/>
            <person name="Gaasterland T."/>
            <person name="Garrett R.A."/>
            <person name="Gordon P."/>
            <person name="Jeffries A.C."/>
            <person name="Kozera C."/>
            <person name="Kushwaha N."/>
            <person name="Lafleur E."/>
            <person name="Medina N."/>
            <person name="Peng X."/>
            <person name="Penny S.L."/>
            <person name="She Q."/>
            <person name="St Jean A."/>
            <person name="van der Oost J."/>
            <person name="Young F."/>
            <person name="Zivanovic Y."/>
            <person name="Doolittle W.F."/>
            <person name="Ragan M.A."/>
            <person name="Sensen C.W."/>
        </authorList>
    </citation>
    <scope>NUCLEOTIDE SEQUENCE [LARGE SCALE GENOMIC DNA]</scope>
    <source>
        <strain>ATCC 35092 / DSM 1617 / JCM 11322 / P2</strain>
    </source>
</reference>
<reference key="2">
    <citation type="journal article" date="2001" name="Proc. Natl. Acad. Sci. U.S.A.">
        <title>The complete genome of the crenarchaeon Sulfolobus solfataricus P2.</title>
        <authorList>
            <person name="She Q."/>
            <person name="Singh R.K."/>
            <person name="Confalonieri F."/>
            <person name="Zivanovic Y."/>
            <person name="Allard G."/>
            <person name="Awayez M.J."/>
            <person name="Chan-Weiher C.C.-Y."/>
            <person name="Clausen I.G."/>
            <person name="Curtis B.A."/>
            <person name="De Moors A."/>
            <person name="Erauso G."/>
            <person name="Fletcher C."/>
            <person name="Gordon P.M.K."/>
            <person name="Heikamp-de Jong I."/>
            <person name="Jeffries A.C."/>
            <person name="Kozera C.J."/>
            <person name="Medina N."/>
            <person name="Peng X."/>
            <person name="Thi-Ngoc H.P."/>
            <person name="Redder P."/>
            <person name="Schenk M.E."/>
            <person name="Theriault C."/>
            <person name="Tolstrup N."/>
            <person name="Charlebois R.L."/>
            <person name="Doolittle W.F."/>
            <person name="Duguet M."/>
            <person name="Gaasterland T."/>
            <person name="Garrett R.A."/>
            <person name="Ragan M.A."/>
            <person name="Sensen C.W."/>
            <person name="Van der Oost J."/>
        </authorList>
    </citation>
    <scope>NUCLEOTIDE SEQUENCE [LARGE SCALE GENOMIC DNA]</scope>
    <source>
        <strain>ATCC 35092 / DSM 1617 / JCM 11322 / P2</strain>
    </source>
</reference>
<evidence type="ECO:0000255" key="1">
    <source>
        <dbReference type="HAMAP-Rule" id="MF_01326"/>
    </source>
</evidence>
<evidence type="ECO:0000305" key="2"/>
<gene>
    <name evidence="1" type="primary">rpl24</name>
    <name evidence="1" type="synonym">rpl24Ab</name>
    <name type="ordered locus">SSO0707</name>
    <name type="ORF">C10_024</name>
</gene>
<keyword id="KW-1185">Reference proteome</keyword>
<keyword id="KW-0687">Ribonucleoprotein</keyword>
<keyword id="KW-0689">Ribosomal protein</keyword>
<keyword id="KW-0694">RNA-binding</keyword>
<keyword id="KW-0699">rRNA-binding</keyword>
<sequence length="119" mass="13536">MVSLKPSKQRKLLYTLPLHQRKKLLVAKVSDDIASQYGIKRIRVRKGDTVRVMRGGNSGKEGKVVEVNTKTGRLAIEGITRKKVDGTPVYVWIHASKVMITKLDLSDPRRREKLEKSKK</sequence>
<protein>
    <recommendedName>
        <fullName evidence="1">Large ribosomal subunit protein uL24</fullName>
    </recommendedName>
    <alternativeName>
        <fullName evidence="2">50S ribosomal protein L24</fullName>
    </alternativeName>
</protein>
<name>RL24_SACS2</name>
<feature type="chain" id="PRO_0000130782" description="Large ribosomal subunit protein uL24">
    <location>
        <begin position="1"/>
        <end position="119"/>
    </location>
</feature>
<organism>
    <name type="scientific">Saccharolobus solfataricus (strain ATCC 35092 / DSM 1617 / JCM 11322 / P2)</name>
    <name type="common">Sulfolobus solfataricus</name>
    <dbReference type="NCBI Taxonomy" id="273057"/>
    <lineage>
        <taxon>Archaea</taxon>
        <taxon>Thermoproteota</taxon>
        <taxon>Thermoprotei</taxon>
        <taxon>Sulfolobales</taxon>
        <taxon>Sulfolobaceae</taxon>
        <taxon>Saccharolobus</taxon>
    </lineage>
</organism>
<comment type="function">
    <text evidence="1">One of two assembly initiator proteins, it binds directly to the 5'-end of the 23S rRNA, where it nucleates assembly of the 50S subunit.</text>
</comment>
<comment type="function">
    <text evidence="1">Located at the polypeptide exit tunnel on the outside of the subunit.</text>
</comment>
<comment type="subunit">
    <text evidence="1">Part of the 50S ribosomal subunit.</text>
</comment>
<comment type="similarity">
    <text evidence="1">Belongs to the universal ribosomal protein uL24 family.</text>
</comment>